<accession>P0A836</accession>
<accession>P07460</accession>
<reference key="1">
    <citation type="journal article" date="1985" name="Biochemistry">
        <title>Primary structure of the succinyl-CoA synthetase of Escherichia coli.</title>
        <authorList>
            <person name="Buck D."/>
            <person name="Spencer M.E."/>
            <person name="Guest J.R."/>
        </authorList>
    </citation>
    <scope>NUCLEOTIDE SEQUENCE [GENOMIC DNA]</scope>
</reference>
<reference key="2">
    <citation type="journal article" date="1996" name="DNA Res.">
        <title>A 718-kb DNA sequence of the Escherichia coli K-12 genome corresponding to the 12.7-28.0 min region on the linkage map.</title>
        <authorList>
            <person name="Oshima T."/>
            <person name="Aiba H."/>
            <person name="Baba T."/>
            <person name="Fujita K."/>
            <person name="Hayashi K."/>
            <person name="Honjo A."/>
            <person name="Ikemoto K."/>
            <person name="Inada T."/>
            <person name="Itoh T."/>
            <person name="Kajihara M."/>
            <person name="Kanai K."/>
            <person name="Kashimoto K."/>
            <person name="Kimura S."/>
            <person name="Kitagawa M."/>
            <person name="Makino K."/>
            <person name="Masuda S."/>
            <person name="Miki T."/>
            <person name="Mizobuchi K."/>
            <person name="Mori H."/>
            <person name="Motomura K."/>
            <person name="Nakamura Y."/>
            <person name="Nashimoto H."/>
            <person name="Nishio Y."/>
            <person name="Saito N."/>
            <person name="Sampei G."/>
            <person name="Seki Y."/>
            <person name="Tagami H."/>
            <person name="Takemoto K."/>
            <person name="Wada C."/>
            <person name="Yamamoto Y."/>
            <person name="Yano M."/>
            <person name="Horiuchi T."/>
        </authorList>
    </citation>
    <scope>NUCLEOTIDE SEQUENCE [LARGE SCALE GENOMIC DNA]</scope>
    <source>
        <strain>K12 / W3110 / ATCC 27325 / DSM 5911</strain>
    </source>
</reference>
<reference key="3">
    <citation type="journal article" date="1997" name="Science">
        <title>The complete genome sequence of Escherichia coli K-12.</title>
        <authorList>
            <person name="Blattner F.R."/>
            <person name="Plunkett G. III"/>
            <person name="Bloch C.A."/>
            <person name="Perna N.T."/>
            <person name="Burland V."/>
            <person name="Riley M."/>
            <person name="Collado-Vides J."/>
            <person name="Glasner J.D."/>
            <person name="Rode C.K."/>
            <person name="Mayhew G.F."/>
            <person name="Gregor J."/>
            <person name="Davis N.W."/>
            <person name="Kirkpatrick H.A."/>
            <person name="Goeden M.A."/>
            <person name="Rose D.J."/>
            <person name="Mau B."/>
            <person name="Shao Y."/>
        </authorList>
    </citation>
    <scope>NUCLEOTIDE SEQUENCE [LARGE SCALE GENOMIC DNA]</scope>
    <source>
        <strain>K12 / MG1655 / ATCC 47076</strain>
    </source>
</reference>
<reference key="4">
    <citation type="journal article" date="2006" name="Mol. Syst. Biol.">
        <title>Highly accurate genome sequences of Escherichia coli K-12 strains MG1655 and W3110.</title>
        <authorList>
            <person name="Hayashi K."/>
            <person name="Morooka N."/>
            <person name="Yamamoto Y."/>
            <person name="Fujita K."/>
            <person name="Isono K."/>
            <person name="Choi S."/>
            <person name="Ohtsubo E."/>
            <person name="Baba T."/>
            <person name="Wanner B.L."/>
            <person name="Mori H."/>
            <person name="Horiuchi T."/>
        </authorList>
    </citation>
    <scope>NUCLEOTIDE SEQUENCE [LARGE SCALE GENOMIC DNA]</scope>
    <source>
        <strain>K12 / W3110 / ATCC 27325 / DSM 5911</strain>
    </source>
</reference>
<reference key="5">
    <citation type="journal article" date="1997" name="Electrophoresis">
        <title>Comparing the predicted and observed properties of proteins encoded in the genome of Escherichia coli K-12.</title>
        <authorList>
            <person name="Link A.J."/>
            <person name="Robison K."/>
            <person name="Church G.M."/>
        </authorList>
    </citation>
    <scope>PROTEIN SEQUENCE OF 1-12</scope>
    <source>
        <strain>K12 / EMG2</strain>
    </source>
</reference>
<reference key="6">
    <citation type="journal article" date="1982" name="J. Biol. Chem.">
        <title>A phosphorus 31 nuclear magnetic resonance study of the intermediates of the Escherichia coli succinyl coenzyme A synthetase reaction. Evidence for substrate synergism and catalytic cooperativity.</title>
        <authorList>
            <person name="Vogel H.J."/>
            <person name="Bridger W.A."/>
        </authorList>
    </citation>
    <scope>CATALYTIC ACTIVITY</scope>
    <scope>COFACTOR</scope>
</reference>
<reference key="7">
    <citation type="journal article" date="1997" name="Electrophoresis">
        <title>Escherichia coli proteome analysis using the gene-protein database.</title>
        <authorList>
            <person name="VanBogelen R.A."/>
            <person name="Abshire K.Z."/>
            <person name="Moldover B."/>
            <person name="Olson E.R."/>
            <person name="Neidhardt F.C."/>
        </authorList>
    </citation>
    <scope>IDENTIFICATION BY 2D-GEL</scope>
</reference>
<reference key="8">
    <citation type="journal article" date="1999" name="Biochemistry">
        <title>Probing the nucleotide-binding site of Escherichia coli succinyl-CoA synthetase.</title>
        <authorList>
            <person name="Joyce M.A."/>
            <person name="Fraser M.E."/>
            <person name="Brownie E.R."/>
            <person name="James M.N."/>
            <person name="Bridger W.A."/>
            <person name="Wolodko W.T."/>
        </authorList>
    </citation>
    <scope>FUNCTION</scope>
    <scope>CATALYTIC ACTIVITY</scope>
    <scope>BIOPHYSICOCHEMICAL PROPERTIES</scope>
</reference>
<reference key="9">
    <citation type="journal article" date="1994" name="J. Biol. Chem.">
        <title>The crystal structure of succinyl-CoA synthetase from Escherichia coli at 2.5-A resolution.</title>
        <authorList>
            <person name="Wolodko W.T."/>
            <person name="Fraser M.E."/>
            <person name="James M.N.G."/>
            <person name="Bridger W.A."/>
        </authorList>
    </citation>
    <scope>X-RAY CRYSTALLOGRAPHY (2.5 ANGSTROMS) IN COMPLEX WITH SUCD</scope>
    <scope>CATALYTIC ACTIVITY</scope>
    <scope>BIOPHYSICOCHEMICAL PROPERTIES</scope>
</reference>
<reference key="10">
    <citation type="journal article" date="1999" name="J. Mol. Biol.">
        <title>A detailed structural description of Escherichia coli succinyl-CoA synthetase.</title>
        <authorList>
            <person name="Fraser M.E."/>
            <person name="James M.N."/>
            <person name="Bridger W.A."/>
            <person name="Wolodko W.T."/>
        </authorList>
    </citation>
    <scope>X-RAY CRYSTALLOGRAPHY (2.3 ANGSTROMS) IN COMPLEX WITH SUCD</scope>
</reference>
<reference key="11">
    <citation type="journal article" date="2000" name="Biochemistry">
        <title>ADP-binding site of Escherichia coli succinyl-CoA synthetase revealed by X-ray crystallography.</title>
        <authorList>
            <person name="Joyce M.A."/>
            <person name="Fraser M.E."/>
            <person name="James M.N."/>
            <person name="Bridger W.A."/>
            <person name="Wolodko W.T."/>
        </authorList>
    </citation>
    <scope>X-RAY CRYSTALLOGRAPHY (3.3 ANGSTROMS) IN COMPLEX WITH SUCD; ADP AND MAGNESIUM</scope>
</reference>
<reference key="12">
    <citation type="journal article" date="2002" name="Biochemistry">
        <title>Two glutamate residues, Glu 208 alpha and Glu 197 beta, are crucial for phosphorylation and dephosphorylation of the active-site histidine residue in succinyl-CoA synthetase.</title>
        <authorList>
            <person name="Fraser M.E."/>
            <person name="Joyce M.A."/>
            <person name="Ryan D.G."/>
            <person name="Wolodko W.T."/>
        </authorList>
    </citation>
    <scope>X-RAY CRYSTALLOGRAPHY (2.35 ANGSTROMS) OF MUTANT ALA-197 IN COMPLEX WITH SUCD</scope>
</reference>
<reference key="13">
    <citation type="journal article" date="2007" name="Acta Crystallogr. D">
        <title>Participation of Cys123alpha of Escherichia coli succinyl-CoA synthetase in catalysis.</title>
        <authorList>
            <person name="Hidber E."/>
            <person name="Brownie E.R."/>
            <person name="Hayakawa K."/>
            <person name="Fraser M.E."/>
        </authorList>
    </citation>
    <scope>X-RAY CRYSTALLOGRAPHY (2.15 ANGSTROMS) IN COMPLEX WITH SUCD</scope>
</reference>
<protein>
    <recommendedName>
        <fullName evidence="1">Succinate--CoA ligase [ADP-forming] subunit beta</fullName>
        <ecNumber evidence="1 2 5">6.2.1.5</ecNumber>
    </recommendedName>
    <alternativeName>
        <fullName evidence="1">Succinyl-CoA synthetase subunit beta</fullName>
        <shortName evidence="1">SCS-beta</shortName>
    </alternativeName>
</protein>
<proteinExistence type="evidence at protein level"/>
<sequence length="388" mass="41393">MNLHEYQAKQLFARYGLPAPVGYACTTPREAEEAASKIGAGPWVVKCQVHAGGRGKAGGVKVVNSKEDIRAFAENWLGKRLVTYQTDANGQPVNQILVEAATDIAKELYLGAVVDRSSRRVVFMASTEGGVEIEKVAEETPHLIHKVALDPLTGPMPYQGRELAFKLGLEGKLVQQFTKIFMGLATIFLERDLALIEINPLVITKQGDLICLDGKLGADGNALFRQPDLREMRDQSQEDPREAQAAQWELNYVALDGNIGCMVNGAGLAMGTMDIVKLHGGEPANFLDVGGGATKERVTEAFKIILSDDKVKAVLVNIFGGIVRCDLIADGIIGAVAEVGVNVPVVVRLEGNNAELGAKKLADSGLNIIAAKGLTDAAQQVVAAVEGK</sequence>
<gene>
    <name evidence="1" type="primary">sucC</name>
    <name type="ordered locus">b0728</name>
    <name type="ordered locus">JW0717</name>
</gene>
<organism>
    <name type="scientific">Escherichia coli (strain K12)</name>
    <dbReference type="NCBI Taxonomy" id="83333"/>
    <lineage>
        <taxon>Bacteria</taxon>
        <taxon>Pseudomonadati</taxon>
        <taxon>Pseudomonadota</taxon>
        <taxon>Gammaproteobacteria</taxon>
        <taxon>Enterobacterales</taxon>
        <taxon>Enterobacteriaceae</taxon>
        <taxon>Escherichia</taxon>
    </lineage>
</organism>
<comment type="function">
    <text evidence="1 2">Succinyl-CoA synthetase functions in the citric acid cycle (TCA), coupling the hydrolysis of succinyl-CoA to the synthesis of either ATP or GTP and thus represents the only step of substrate-level phosphorylation in the TCA. The beta subunit provides nucleotide specificity of the enzyme and binds the substrate succinate, while the binding sites for coenzyme A and phosphate are found in the alpha subunit. Can use either ATP or GTP, but prefers ATP. It can also function in the other direction for anabolic purposes, and this may be particularly important for providing succinyl-CoA during anaerobic growth when the oxidative route from 2-oxoglutarate is severely repressed.</text>
</comment>
<comment type="catalytic activity">
    <reaction evidence="1 2 5">
        <text>succinate + ATP + CoA = succinyl-CoA + ADP + phosphate</text>
        <dbReference type="Rhea" id="RHEA:17661"/>
        <dbReference type="ChEBI" id="CHEBI:30031"/>
        <dbReference type="ChEBI" id="CHEBI:30616"/>
        <dbReference type="ChEBI" id="CHEBI:43474"/>
        <dbReference type="ChEBI" id="CHEBI:57287"/>
        <dbReference type="ChEBI" id="CHEBI:57292"/>
        <dbReference type="ChEBI" id="CHEBI:456216"/>
        <dbReference type="EC" id="6.2.1.5"/>
    </reaction>
    <physiologicalReaction direction="right-to-left" evidence="1 2">
        <dbReference type="Rhea" id="RHEA:17663"/>
    </physiologicalReaction>
</comment>
<comment type="catalytic activity">
    <reaction evidence="1 2">
        <text>GTP + succinate + CoA = succinyl-CoA + GDP + phosphate</text>
        <dbReference type="Rhea" id="RHEA:22120"/>
        <dbReference type="ChEBI" id="CHEBI:30031"/>
        <dbReference type="ChEBI" id="CHEBI:37565"/>
        <dbReference type="ChEBI" id="CHEBI:43474"/>
        <dbReference type="ChEBI" id="CHEBI:57287"/>
        <dbReference type="ChEBI" id="CHEBI:57292"/>
        <dbReference type="ChEBI" id="CHEBI:58189"/>
    </reaction>
    <physiologicalReaction direction="right-to-left" evidence="1 2">
        <dbReference type="Rhea" id="RHEA:22122"/>
    </physiologicalReaction>
</comment>
<comment type="cofactor">
    <cofactor evidence="1 3 5">
        <name>Mg(2+)</name>
        <dbReference type="ChEBI" id="CHEBI:18420"/>
    </cofactor>
    <text evidence="1 3">Binds 1 Mg(2+) ion per subunit.</text>
</comment>
<comment type="activity regulation">
    <text>Exhibits two interesting properties: 'substrate synergism', in which the enzyme is most active for the catalysis of its partial reactions only when all the substrate-binding sites are occupied, and 'catalytic cooperativity' between alternating active sites in the tetramer, whereby the interaction of substrates (particularly ATP) at one site is needed to promote catalysis at the other.</text>
</comment>
<comment type="biophysicochemical properties">
    <kinetics>
        <KM evidence="2">70 uM for ATP</KM>
        <KM evidence="2">394 uM for GTP</KM>
        <text evidence="2">kcat is 2684 min(-1) with ATP as substrate and 1471 min(-1) with GTP as substrate.</text>
    </kinetics>
    <phDependence>
        <text evidence="6">Optimum pH is 7.4.</text>
    </phDependence>
</comment>
<comment type="pathway">
    <text evidence="1 8">Carbohydrate metabolism; tricarboxylic acid cycle; succinate from succinyl-CoA (ligase route): step 1/1.</text>
</comment>
<comment type="subunit">
    <text evidence="1 6 7">Heterotetramer of two alpha and two beta subunits.</text>
</comment>
<comment type="interaction">
    <interactant intactId="EBI-369117">
        <id>P0A836</id>
    </interactant>
    <interactant intactId="EBI-369078">
        <id>P0AGE9</id>
        <label>sucD</label>
    </interactant>
    <organismsDiffer>false</organismsDiffer>
    <experiments>4</experiments>
</comment>
<comment type="miscellaneous">
    <text>Succinyl-CoA synthetase (SCS) of E.coli catalyzes its reaction via three steps that involve phosphoryl enzyme and enzyme-bound succinyl phosphate as intermediates.</text>
</comment>
<comment type="similarity">
    <text evidence="1">Belongs to the succinate/malate CoA ligase beta subunit family.</text>
</comment>
<feature type="chain" id="PRO_0000102832" description="Succinate--CoA ligase [ADP-forming] subunit beta">
    <location>
        <begin position="1"/>
        <end position="388"/>
    </location>
</feature>
<feature type="domain" description="ATP-grasp" evidence="1">
    <location>
        <begin position="9"/>
        <end position="244"/>
    </location>
</feature>
<feature type="binding site" evidence="1 3">
    <location>
        <position position="46"/>
    </location>
    <ligand>
        <name>ATP</name>
        <dbReference type="ChEBI" id="CHEBI:30616"/>
    </ligand>
</feature>
<feature type="binding site" evidence="1 3">
    <location>
        <begin position="53"/>
        <end position="55"/>
    </location>
    <ligand>
        <name>ATP</name>
        <dbReference type="ChEBI" id="CHEBI:30616"/>
    </ligand>
</feature>
<feature type="binding site" evidence="1 3">
    <location>
        <position position="99"/>
    </location>
    <ligand>
        <name>ATP</name>
        <dbReference type="ChEBI" id="CHEBI:30616"/>
    </ligand>
</feature>
<feature type="binding site" evidence="1 3">
    <location>
        <position position="102"/>
    </location>
    <ligand>
        <name>ATP</name>
        <dbReference type="ChEBI" id="CHEBI:30616"/>
    </ligand>
</feature>
<feature type="binding site" evidence="1 3">
    <location>
        <position position="107"/>
    </location>
    <ligand>
        <name>ATP</name>
        <dbReference type="ChEBI" id="CHEBI:30616"/>
    </ligand>
</feature>
<feature type="binding site" evidence="1 3">
    <location>
        <position position="199"/>
    </location>
    <ligand>
        <name>Mg(2+)</name>
        <dbReference type="ChEBI" id="CHEBI:18420"/>
    </ligand>
</feature>
<feature type="binding site" evidence="1 3">
    <location>
        <position position="213"/>
    </location>
    <ligand>
        <name>Mg(2+)</name>
        <dbReference type="ChEBI" id="CHEBI:18420"/>
    </ligand>
</feature>
<feature type="binding site" evidence="1">
    <location>
        <position position="264"/>
    </location>
    <ligand>
        <name>substrate</name>
        <note>ligand shared with subunit alpha</note>
    </ligand>
</feature>
<feature type="binding site" evidence="1">
    <location>
        <begin position="321"/>
        <end position="323"/>
    </location>
    <ligand>
        <name>substrate</name>
        <note>ligand shared with subunit alpha</note>
    </ligand>
</feature>
<feature type="mutagenesis site" description="Prevents phosphorylation of the enzyme intermediate in both reaction directions." evidence="4">
    <original>E</original>
    <variation>A</variation>
    <location>
        <position position="197"/>
    </location>
</feature>
<feature type="mutagenesis site" description="Prevents phosphorylation of the enzyme intermediate by ATP." evidence="4">
    <original>E</original>
    <variation>Q</variation>
    <location>
        <position position="197"/>
    </location>
</feature>
<feature type="helix" evidence="10">
    <location>
        <begin position="5"/>
        <end position="14"/>
    </location>
</feature>
<feature type="strand" evidence="10">
    <location>
        <begin position="22"/>
        <end position="27"/>
    </location>
</feature>
<feature type="helix" evidence="10">
    <location>
        <begin position="28"/>
        <end position="38"/>
    </location>
</feature>
<feature type="strand" evidence="10">
    <location>
        <begin position="43"/>
        <end position="47"/>
    </location>
</feature>
<feature type="strand" evidence="10">
    <location>
        <begin position="50"/>
        <end position="52"/>
    </location>
</feature>
<feature type="turn" evidence="10">
    <location>
        <begin position="54"/>
        <end position="58"/>
    </location>
</feature>
<feature type="strand" evidence="10">
    <location>
        <begin position="60"/>
        <end position="63"/>
    </location>
</feature>
<feature type="helix" evidence="10">
    <location>
        <begin position="66"/>
        <end position="76"/>
    </location>
</feature>
<feature type="strand" evidence="10">
    <location>
        <begin position="79"/>
        <end position="81"/>
    </location>
</feature>
<feature type="strand" evidence="10">
    <location>
        <begin position="96"/>
        <end position="100"/>
    </location>
</feature>
<feature type="strand" evidence="10">
    <location>
        <begin position="104"/>
        <end position="115"/>
    </location>
</feature>
<feature type="turn" evidence="10">
    <location>
        <begin position="116"/>
        <end position="119"/>
    </location>
</feature>
<feature type="strand" evidence="10">
    <location>
        <begin position="120"/>
        <end position="127"/>
    </location>
</feature>
<feature type="helix" evidence="10">
    <location>
        <begin position="133"/>
        <end position="139"/>
    </location>
</feature>
<feature type="helix" evidence="10">
    <location>
        <begin position="141"/>
        <end position="143"/>
    </location>
</feature>
<feature type="strand" evidence="10">
    <location>
        <begin position="144"/>
        <end position="148"/>
    </location>
</feature>
<feature type="turn" evidence="10">
    <location>
        <begin position="151"/>
        <end position="153"/>
    </location>
</feature>
<feature type="helix" evidence="10">
    <location>
        <begin position="157"/>
        <end position="166"/>
    </location>
</feature>
<feature type="helix" evidence="10">
    <location>
        <begin position="172"/>
        <end position="190"/>
    </location>
</feature>
<feature type="strand" evidence="10">
    <location>
        <begin position="193"/>
        <end position="204"/>
    </location>
</feature>
<feature type="strand" evidence="10">
    <location>
        <begin position="209"/>
        <end position="212"/>
    </location>
</feature>
<feature type="strand" evidence="10">
    <location>
        <begin position="215"/>
        <end position="218"/>
    </location>
</feature>
<feature type="helix" evidence="10">
    <location>
        <begin position="220"/>
        <end position="225"/>
    </location>
</feature>
<feature type="helix" evidence="10">
    <location>
        <begin position="227"/>
        <end position="232"/>
    </location>
</feature>
<feature type="helix" evidence="10">
    <location>
        <begin position="235"/>
        <end position="237"/>
    </location>
</feature>
<feature type="helix" evidence="10">
    <location>
        <begin position="240"/>
        <end position="247"/>
    </location>
</feature>
<feature type="strand" evidence="10">
    <location>
        <begin position="251"/>
        <end position="254"/>
    </location>
</feature>
<feature type="strand" evidence="10">
    <location>
        <begin position="256"/>
        <end position="265"/>
    </location>
</feature>
<feature type="helix" evidence="10">
    <location>
        <begin position="266"/>
        <end position="278"/>
    </location>
</feature>
<feature type="strand" evidence="10">
    <location>
        <begin position="285"/>
        <end position="288"/>
    </location>
</feature>
<feature type="helix" evidence="10">
    <location>
        <begin position="295"/>
        <end position="306"/>
    </location>
</feature>
<feature type="strand" evidence="11">
    <location>
        <begin position="308"/>
        <end position="310"/>
    </location>
</feature>
<feature type="strand" evidence="10">
    <location>
        <begin position="313"/>
        <end position="320"/>
    </location>
</feature>
<feature type="strand" evidence="9">
    <location>
        <begin position="321"/>
        <end position="323"/>
    </location>
</feature>
<feature type="helix" evidence="10">
    <location>
        <begin position="325"/>
        <end position="339"/>
    </location>
</feature>
<feature type="strand" evidence="10">
    <location>
        <begin position="345"/>
        <end position="351"/>
    </location>
</feature>
<feature type="helix" evidence="10">
    <location>
        <begin position="354"/>
        <end position="362"/>
    </location>
</feature>
<feature type="strand" evidence="10">
    <location>
        <begin position="366"/>
        <end position="370"/>
    </location>
</feature>
<feature type="helix" evidence="10">
    <location>
        <begin position="374"/>
        <end position="384"/>
    </location>
</feature>
<feature type="turn" evidence="10">
    <location>
        <begin position="385"/>
        <end position="387"/>
    </location>
</feature>
<dbReference type="EC" id="6.2.1.5" evidence="1 2 5"/>
<dbReference type="EMBL" id="J01619">
    <property type="protein sequence ID" value="AAA23899.1"/>
    <property type="molecule type" value="Genomic_DNA"/>
</dbReference>
<dbReference type="EMBL" id="U00096">
    <property type="protein sequence ID" value="AAC73822.1"/>
    <property type="molecule type" value="Genomic_DNA"/>
</dbReference>
<dbReference type="EMBL" id="AP009048">
    <property type="protein sequence ID" value="BAA35394.1"/>
    <property type="molecule type" value="Genomic_DNA"/>
</dbReference>
<dbReference type="PIR" id="A24090">
    <property type="entry name" value="SYECSB"/>
</dbReference>
<dbReference type="RefSeq" id="NP_415256.1">
    <property type="nucleotide sequence ID" value="NC_000913.3"/>
</dbReference>
<dbReference type="RefSeq" id="WP_001048602.1">
    <property type="nucleotide sequence ID" value="NZ_STEB01000035.1"/>
</dbReference>
<dbReference type="PDB" id="1CQI">
    <property type="method" value="X-ray"/>
    <property type="resolution" value="3.30 A"/>
    <property type="chains" value="B/E=1-385"/>
</dbReference>
<dbReference type="PDB" id="1CQJ">
    <property type="method" value="X-ray"/>
    <property type="resolution" value="2.90 A"/>
    <property type="chains" value="B/E=1-385"/>
</dbReference>
<dbReference type="PDB" id="1JKJ">
    <property type="method" value="X-ray"/>
    <property type="resolution" value="2.35 A"/>
    <property type="chains" value="B/E=1-388"/>
</dbReference>
<dbReference type="PDB" id="1JLL">
    <property type="method" value="X-ray"/>
    <property type="resolution" value="2.69 A"/>
    <property type="chains" value="B/E=1-388"/>
</dbReference>
<dbReference type="PDB" id="1SCU">
    <property type="method" value="X-ray"/>
    <property type="resolution" value="2.50 A"/>
    <property type="chains" value="B/E=1-388"/>
</dbReference>
<dbReference type="PDB" id="2NU6">
    <property type="method" value="X-ray"/>
    <property type="resolution" value="2.55 A"/>
    <property type="chains" value="B/E=1-388"/>
</dbReference>
<dbReference type="PDB" id="2NU7">
    <property type="method" value="X-ray"/>
    <property type="resolution" value="2.20 A"/>
    <property type="chains" value="B/E=1-388"/>
</dbReference>
<dbReference type="PDB" id="2NU8">
    <property type="method" value="X-ray"/>
    <property type="resolution" value="2.15 A"/>
    <property type="chains" value="B/E=1-388"/>
</dbReference>
<dbReference type="PDB" id="2NU9">
    <property type="method" value="X-ray"/>
    <property type="resolution" value="2.90 A"/>
    <property type="chains" value="B/E/G/I=1-388"/>
</dbReference>
<dbReference type="PDB" id="2NUA">
    <property type="method" value="X-ray"/>
    <property type="resolution" value="2.95 A"/>
    <property type="chains" value="B/E=1-388"/>
</dbReference>
<dbReference type="PDB" id="2SCU">
    <property type="method" value="X-ray"/>
    <property type="resolution" value="2.30 A"/>
    <property type="chains" value="B/E=1-388"/>
</dbReference>
<dbReference type="PDBsum" id="1CQI"/>
<dbReference type="PDBsum" id="1CQJ"/>
<dbReference type="PDBsum" id="1JKJ"/>
<dbReference type="PDBsum" id="1JLL"/>
<dbReference type="PDBsum" id="1SCU"/>
<dbReference type="PDBsum" id="2NU6"/>
<dbReference type="PDBsum" id="2NU7"/>
<dbReference type="PDBsum" id="2NU8"/>
<dbReference type="PDBsum" id="2NU9"/>
<dbReference type="PDBsum" id="2NUA"/>
<dbReference type="PDBsum" id="2SCU"/>
<dbReference type="SMR" id="P0A836"/>
<dbReference type="BioGRID" id="4259946">
    <property type="interactions" value="26"/>
</dbReference>
<dbReference type="BioGRID" id="849689">
    <property type="interactions" value="1"/>
</dbReference>
<dbReference type="ComplexPortal" id="CPX-1092">
    <property type="entry name" value="Succinyl-CoA synthetase"/>
</dbReference>
<dbReference type="DIP" id="DIP-31852N"/>
<dbReference type="FunCoup" id="P0A836">
    <property type="interactions" value="858"/>
</dbReference>
<dbReference type="IntAct" id="P0A836">
    <property type="interactions" value="30"/>
</dbReference>
<dbReference type="STRING" id="511145.b0728"/>
<dbReference type="CarbonylDB" id="P0A836"/>
<dbReference type="jPOST" id="P0A836"/>
<dbReference type="PaxDb" id="511145-b0728"/>
<dbReference type="EnsemblBacteria" id="AAC73822">
    <property type="protein sequence ID" value="AAC73822"/>
    <property type="gene ID" value="b0728"/>
</dbReference>
<dbReference type="GeneID" id="93776757"/>
<dbReference type="GeneID" id="945312"/>
<dbReference type="KEGG" id="ecj:JW0717"/>
<dbReference type="KEGG" id="eco:b0728"/>
<dbReference type="KEGG" id="ecoc:C3026_03645"/>
<dbReference type="PATRIC" id="fig|1411691.4.peg.1545"/>
<dbReference type="EchoBASE" id="EB0974"/>
<dbReference type="eggNOG" id="COG0045">
    <property type="taxonomic scope" value="Bacteria"/>
</dbReference>
<dbReference type="HOGENOM" id="CLU_037430_4_0_6"/>
<dbReference type="InParanoid" id="P0A836"/>
<dbReference type="OMA" id="ITACDEV"/>
<dbReference type="OrthoDB" id="9802602at2"/>
<dbReference type="PhylomeDB" id="P0A836"/>
<dbReference type="BioCyc" id="EcoCyc:SUCCCOASYN-BETA"/>
<dbReference type="BioCyc" id="MetaCyc:SUCCCOASYN-BETA"/>
<dbReference type="BRENDA" id="6.2.1.5">
    <property type="organism ID" value="2165"/>
</dbReference>
<dbReference type="UniPathway" id="UPA00223">
    <property type="reaction ID" value="UER00999"/>
</dbReference>
<dbReference type="EvolutionaryTrace" id="P0A836"/>
<dbReference type="PRO" id="PR:P0A836"/>
<dbReference type="Proteomes" id="UP000000625">
    <property type="component" value="Chromosome"/>
</dbReference>
<dbReference type="GO" id="GO:0005737">
    <property type="term" value="C:cytoplasm"/>
    <property type="evidence" value="ECO:0007005"/>
    <property type="project" value="UniProtKB"/>
</dbReference>
<dbReference type="GO" id="GO:0005829">
    <property type="term" value="C:cytosol"/>
    <property type="evidence" value="ECO:0000314"/>
    <property type="project" value="EcoCyc"/>
</dbReference>
<dbReference type="GO" id="GO:0042709">
    <property type="term" value="C:succinate-CoA ligase complex"/>
    <property type="evidence" value="ECO:0000318"/>
    <property type="project" value="GO_Central"/>
</dbReference>
<dbReference type="GO" id="GO:0009361">
    <property type="term" value="C:succinate-CoA ligase complex (ADP-forming)"/>
    <property type="evidence" value="ECO:0000314"/>
    <property type="project" value="EcoCyc"/>
</dbReference>
<dbReference type="GO" id="GO:0005524">
    <property type="term" value="F:ATP binding"/>
    <property type="evidence" value="ECO:0007669"/>
    <property type="project" value="UniProtKB-UniRule"/>
</dbReference>
<dbReference type="GO" id="GO:0000287">
    <property type="term" value="F:magnesium ion binding"/>
    <property type="evidence" value="ECO:0007669"/>
    <property type="project" value="UniProtKB-UniRule"/>
</dbReference>
<dbReference type="GO" id="GO:0004775">
    <property type="term" value="F:succinate-CoA ligase (ADP-forming) activity"/>
    <property type="evidence" value="ECO:0000315"/>
    <property type="project" value="EcoliWiki"/>
</dbReference>
<dbReference type="GO" id="GO:0004776">
    <property type="term" value="F:succinate-CoA ligase (GDP-forming) activity"/>
    <property type="evidence" value="ECO:0007669"/>
    <property type="project" value="RHEA"/>
</dbReference>
<dbReference type="GO" id="GO:0006104">
    <property type="term" value="P:succinyl-CoA metabolic process"/>
    <property type="evidence" value="ECO:0000318"/>
    <property type="project" value="GO_Central"/>
</dbReference>
<dbReference type="GO" id="GO:0006099">
    <property type="term" value="P:tricarboxylic acid cycle"/>
    <property type="evidence" value="ECO:0000315"/>
    <property type="project" value="EcoliWiki"/>
</dbReference>
<dbReference type="FunFam" id="3.30.1490.20:FF:000002">
    <property type="entry name" value="Succinate--CoA ligase [ADP-forming] subunit beta"/>
    <property type="match status" value="1"/>
</dbReference>
<dbReference type="FunFam" id="3.30.470.20:FF:000002">
    <property type="entry name" value="Succinate--CoA ligase [ADP-forming] subunit beta"/>
    <property type="match status" value="1"/>
</dbReference>
<dbReference type="FunFam" id="3.40.50.261:FF:000001">
    <property type="entry name" value="Succinate--CoA ligase [ADP-forming] subunit beta"/>
    <property type="match status" value="1"/>
</dbReference>
<dbReference type="Gene3D" id="3.30.1490.20">
    <property type="entry name" value="ATP-grasp fold, A domain"/>
    <property type="match status" value="1"/>
</dbReference>
<dbReference type="Gene3D" id="3.30.470.20">
    <property type="entry name" value="ATP-grasp fold, B domain"/>
    <property type="match status" value="1"/>
</dbReference>
<dbReference type="Gene3D" id="3.40.50.261">
    <property type="entry name" value="Succinyl-CoA synthetase domains"/>
    <property type="match status" value="1"/>
</dbReference>
<dbReference type="HAMAP" id="MF_00558">
    <property type="entry name" value="Succ_CoA_beta"/>
    <property type="match status" value="1"/>
</dbReference>
<dbReference type="InterPro" id="IPR011761">
    <property type="entry name" value="ATP-grasp"/>
</dbReference>
<dbReference type="InterPro" id="IPR013650">
    <property type="entry name" value="ATP-grasp_succ-CoA_synth-type"/>
</dbReference>
<dbReference type="InterPro" id="IPR013815">
    <property type="entry name" value="ATP_grasp_subdomain_1"/>
</dbReference>
<dbReference type="InterPro" id="IPR017866">
    <property type="entry name" value="Succ-CoA_synthase_bsu_CS"/>
</dbReference>
<dbReference type="InterPro" id="IPR005811">
    <property type="entry name" value="SUCC_ACL_C"/>
</dbReference>
<dbReference type="InterPro" id="IPR005809">
    <property type="entry name" value="Succ_CoA_ligase-like_bsu"/>
</dbReference>
<dbReference type="InterPro" id="IPR016102">
    <property type="entry name" value="Succinyl-CoA_synth-like"/>
</dbReference>
<dbReference type="NCBIfam" id="NF001913">
    <property type="entry name" value="PRK00696.1"/>
    <property type="match status" value="1"/>
</dbReference>
<dbReference type="NCBIfam" id="TIGR01016">
    <property type="entry name" value="sucCoAbeta"/>
    <property type="match status" value="1"/>
</dbReference>
<dbReference type="PANTHER" id="PTHR11815:SF10">
    <property type="entry name" value="SUCCINATE--COA LIGASE [GDP-FORMING] SUBUNIT BETA, MITOCHONDRIAL"/>
    <property type="match status" value="1"/>
</dbReference>
<dbReference type="PANTHER" id="PTHR11815">
    <property type="entry name" value="SUCCINYL-COA SYNTHETASE BETA CHAIN"/>
    <property type="match status" value="1"/>
</dbReference>
<dbReference type="Pfam" id="PF08442">
    <property type="entry name" value="ATP-grasp_2"/>
    <property type="match status" value="1"/>
</dbReference>
<dbReference type="Pfam" id="PF00549">
    <property type="entry name" value="Ligase_CoA"/>
    <property type="match status" value="1"/>
</dbReference>
<dbReference type="PIRSF" id="PIRSF001554">
    <property type="entry name" value="SucCS_beta"/>
    <property type="match status" value="1"/>
</dbReference>
<dbReference type="SUPFAM" id="SSF56059">
    <property type="entry name" value="Glutathione synthetase ATP-binding domain-like"/>
    <property type="match status" value="1"/>
</dbReference>
<dbReference type="SUPFAM" id="SSF52210">
    <property type="entry name" value="Succinyl-CoA synthetase domains"/>
    <property type="match status" value="1"/>
</dbReference>
<dbReference type="PROSITE" id="PS50975">
    <property type="entry name" value="ATP_GRASP"/>
    <property type="match status" value="1"/>
</dbReference>
<dbReference type="PROSITE" id="PS01217">
    <property type="entry name" value="SUCCINYL_COA_LIG_3"/>
    <property type="match status" value="1"/>
</dbReference>
<name>SUCC_ECOLI</name>
<evidence type="ECO:0000255" key="1">
    <source>
        <dbReference type="HAMAP-Rule" id="MF_00558"/>
    </source>
</evidence>
<evidence type="ECO:0000269" key="2">
    <source>
    </source>
</evidence>
<evidence type="ECO:0000269" key="3">
    <source>
    </source>
</evidence>
<evidence type="ECO:0000269" key="4">
    <source>
    </source>
</evidence>
<evidence type="ECO:0000269" key="5">
    <source>
    </source>
</evidence>
<evidence type="ECO:0000269" key="6">
    <source>
    </source>
</evidence>
<evidence type="ECO:0000269" key="7">
    <source>
    </source>
</evidence>
<evidence type="ECO:0000305" key="8">
    <source>
    </source>
</evidence>
<evidence type="ECO:0007829" key="9">
    <source>
        <dbReference type="PDB" id="1JLL"/>
    </source>
</evidence>
<evidence type="ECO:0007829" key="10">
    <source>
        <dbReference type="PDB" id="2NU8"/>
    </source>
</evidence>
<evidence type="ECO:0007829" key="11">
    <source>
        <dbReference type="PDB" id="2SCU"/>
    </source>
</evidence>
<keyword id="KW-0002">3D-structure</keyword>
<keyword id="KW-0067">ATP-binding</keyword>
<keyword id="KW-0903">Direct protein sequencing</keyword>
<keyword id="KW-0436">Ligase</keyword>
<keyword id="KW-0460">Magnesium</keyword>
<keyword id="KW-0479">Metal-binding</keyword>
<keyword id="KW-0547">Nucleotide-binding</keyword>
<keyword id="KW-1185">Reference proteome</keyword>
<keyword id="KW-0816">Tricarboxylic acid cycle</keyword>